<sequence length="278" mass="32355">MKNWKFNKINYPTFEKSGAIPRSITKTFEKLKKELNPHSESEIIEEFTISRYQTIASLRYLIVLVVFPVVVHQVSKNFIIGPAVDYFWKYNQIDVFLNSSQEERAFAELQRFEEKIHFEMLIGTKQSVSQQSLEASIKQKAVEIADHYTYESLHAIKNILADSISISVFILLIVLGKRQTFVLKSFLNEIVYGLSDTAKAFLIILFTDMFIGFHSPHGWEVVIESLLRHFGLPENRDFIFLFIATFPVSLDTVFKYWIFRYLNQVSPSAVATYHNMNE</sequence>
<evidence type="ECO:0000255" key="1">
    <source>
        <dbReference type="HAMAP-Rule" id="MF_01308"/>
    </source>
</evidence>
<evidence type="ECO:0000305" key="2"/>
<comment type="function">
    <text evidence="1">Contributes to K(+)/H(+) antiport activity by supporting proton efflux to control proton extrusion and homeostasis in chloroplasts in a light-dependent manner to modulate photosynthesis. Prevents excessive induction of non-photochemical quenching (NPQ) under continuous-light conditions. Indirectly promotes efficient inorganic carbon uptake into chloroplasts.</text>
</comment>
<comment type="catalytic activity">
    <reaction evidence="1">
        <text>K(+)(in) + H(+)(out) = K(+)(out) + H(+)(in)</text>
        <dbReference type="Rhea" id="RHEA:29467"/>
        <dbReference type="ChEBI" id="CHEBI:15378"/>
        <dbReference type="ChEBI" id="CHEBI:29103"/>
    </reaction>
</comment>
<comment type="subcellular location">
    <subcellularLocation>
        <location evidence="1">Plastid</location>
        <location evidence="1">Chloroplast inner membrane</location>
        <topology evidence="1">Multi-pass membrane protein</topology>
    </subcellularLocation>
</comment>
<comment type="similarity">
    <text evidence="1 2">Belongs to the CemA family.</text>
</comment>
<dbReference type="EMBL" id="AF022186">
    <property type="protein sequence ID" value="AAF12995.1"/>
    <property type="molecule type" value="Genomic_DNA"/>
</dbReference>
<dbReference type="RefSeq" id="NP_045051.1">
    <property type="nucleotide sequence ID" value="NC_001840.1"/>
</dbReference>
<dbReference type="SMR" id="Q9TM16"/>
<dbReference type="GeneID" id="800302"/>
<dbReference type="GO" id="GO:0009706">
    <property type="term" value="C:chloroplast inner membrane"/>
    <property type="evidence" value="ECO:0007669"/>
    <property type="project" value="UniProtKB-SubCell"/>
</dbReference>
<dbReference type="GO" id="GO:0015297">
    <property type="term" value="F:antiporter activity"/>
    <property type="evidence" value="ECO:0007669"/>
    <property type="project" value="UniProtKB-KW"/>
</dbReference>
<dbReference type="GO" id="GO:0015078">
    <property type="term" value="F:proton transmembrane transporter activity"/>
    <property type="evidence" value="ECO:0007669"/>
    <property type="project" value="UniProtKB-UniRule"/>
</dbReference>
<dbReference type="GO" id="GO:0006813">
    <property type="term" value="P:potassium ion transport"/>
    <property type="evidence" value="ECO:0007669"/>
    <property type="project" value="UniProtKB-UniRule"/>
</dbReference>
<dbReference type="HAMAP" id="MF_01308">
    <property type="entry name" value="CemA_PxcA"/>
    <property type="match status" value="1"/>
</dbReference>
<dbReference type="InterPro" id="IPR004282">
    <property type="entry name" value="CemA"/>
</dbReference>
<dbReference type="PANTHER" id="PTHR33650:SF2">
    <property type="entry name" value="CHLOROPLAST ENVELOPE MEMBRANE PROTEIN"/>
    <property type="match status" value="1"/>
</dbReference>
<dbReference type="PANTHER" id="PTHR33650">
    <property type="entry name" value="CHLOROPLAST ENVELOPE MEMBRANE PROTEIN-RELATED"/>
    <property type="match status" value="1"/>
</dbReference>
<dbReference type="Pfam" id="PF03040">
    <property type="entry name" value="CemA"/>
    <property type="match status" value="1"/>
</dbReference>
<accession>Q9TM16</accession>
<reference key="1">
    <citation type="journal article" date="2000" name="J. Mol. Evol.">
        <title>The structure and gene repertoire of an ancient red algal plastid genome.</title>
        <authorList>
            <person name="Gloeckner G."/>
            <person name="Rosenthal A."/>
            <person name="Valentin K.-U."/>
        </authorList>
    </citation>
    <scope>NUCLEOTIDE SEQUENCE [LARGE SCALE GENOMIC DNA]</scope>
    <source>
        <strain>RK-1</strain>
    </source>
</reference>
<feature type="chain" id="PRO_0000216639" description="Potassium/proton antiporter CemA">
    <location>
        <begin position="1"/>
        <end position="278"/>
    </location>
</feature>
<feature type="transmembrane region" description="Helical" evidence="1">
    <location>
        <begin position="61"/>
        <end position="81"/>
    </location>
</feature>
<feature type="transmembrane region" description="Helical" evidence="1">
    <location>
        <begin position="155"/>
        <end position="175"/>
    </location>
</feature>
<feature type="transmembrane region" description="Helical" evidence="1">
    <location>
        <begin position="203"/>
        <end position="223"/>
    </location>
</feature>
<feature type="transmembrane region" description="Helical" evidence="1">
    <location>
        <begin position="238"/>
        <end position="258"/>
    </location>
</feature>
<name>CEMA_CYACA</name>
<proteinExistence type="inferred from homology"/>
<protein>
    <recommendedName>
        <fullName evidence="1">Potassium/proton antiporter CemA</fullName>
    </recommendedName>
    <alternativeName>
        <fullName evidence="1">Chloroplast envelope membrane protein A</fullName>
        <shortName evidence="1">CemA</shortName>
    </alternativeName>
</protein>
<gene>
    <name evidence="1" type="primary">cemA</name>
    <name type="synonym">ycf10</name>
    <name type="synonym">ycf56</name>
</gene>
<organism>
    <name type="scientific">Cyanidium caldarium</name>
    <name type="common">Red alga</name>
    <dbReference type="NCBI Taxonomy" id="2771"/>
    <lineage>
        <taxon>Eukaryota</taxon>
        <taxon>Rhodophyta</taxon>
        <taxon>Bangiophyceae</taxon>
        <taxon>Cyanidiales</taxon>
        <taxon>Cyanidiaceae</taxon>
        <taxon>Cyanidium</taxon>
    </lineage>
</organism>
<geneLocation type="chloroplast"/>
<keyword id="KW-0050">Antiport</keyword>
<keyword id="KW-0150">Chloroplast</keyword>
<keyword id="KW-0375">Hydrogen ion transport</keyword>
<keyword id="KW-0406">Ion transport</keyword>
<keyword id="KW-0472">Membrane</keyword>
<keyword id="KW-0934">Plastid</keyword>
<keyword id="KW-1001">Plastid inner membrane</keyword>
<keyword id="KW-0630">Potassium</keyword>
<keyword id="KW-0633">Potassium transport</keyword>
<keyword id="KW-0812">Transmembrane</keyword>
<keyword id="KW-1133">Transmembrane helix</keyword>
<keyword id="KW-0813">Transport</keyword>